<keyword id="KW-0119">Carbohydrate metabolism</keyword>
<keyword id="KW-0326">Glycosidase</keyword>
<keyword id="KW-0378">Hydrolase</keyword>
<keyword id="KW-0624">Polysaccharide degradation</keyword>
<keyword id="KW-0732">Signal</keyword>
<keyword id="KW-0858">Xylan degradation</keyword>
<sequence length="228" mass="25491">MNLRKLRLLFVMCIGLTLILTAVPAHARTITNNEMGNHSGYDYELWKDYGNTSMTLNNGGAFSAGWNNIGNALFRKGKKFDSTRTHHQLGNISINYNASFNPGGNSYLCVYGWTQSPLAEYYIVDSWGTYRPTGAYKGSFYADGGTYDIYETTRVNQPSIIGIATFKQYWSVRQTKRTSGTVSVSAHFRKWESLGMPMGKMYETAFTVEGYQSSGSANVMTNQLFIGN</sequence>
<protein>
    <recommendedName>
        <fullName>Endo-1,4-beta-xylanase A</fullName>
        <shortName>Xylanase A</shortName>
        <ecNumber>3.2.1.8</ecNumber>
    </recommendedName>
    <alternativeName>
        <fullName>1,4-beta-D-xylan xylanohydrolase A</fullName>
    </alternativeName>
</protein>
<feature type="signal peptide">
    <location>
        <begin position="1"/>
        <end position="27"/>
    </location>
</feature>
<feature type="chain" id="PRO_0000007997" description="Endo-1,4-beta-xylanase A">
    <location>
        <begin position="28"/>
        <end position="228"/>
    </location>
</feature>
<feature type="domain" description="GH11" evidence="1">
    <location>
        <begin position="29"/>
        <end position="222"/>
    </location>
</feature>
<feature type="active site" description="Nucleophile" evidence="2">
    <location>
        <position position="120"/>
    </location>
</feature>
<feature type="active site" description="Proton donor" evidence="3">
    <location>
        <position position="209"/>
    </location>
</feature>
<feature type="mutagenesis site" description="Loss of activity." evidence="4">
    <original>E</original>
    <variation>S</variation>
    <location>
        <position position="120"/>
    </location>
</feature>
<feature type="mutagenesis site" description="Loss of activity." evidence="4">
    <original>E</original>
    <variation>D</variation>
    <location>
        <position position="209"/>
    </location>
</feature>
<name>XYNA_BACPU</name>
<organism>
    <name type="scientific">Bacillus pumilus</name>
    <name type="common">Bacillus mesentericus</name>
    <dbReference type="NCBI Taxonomy" id="1408"/>
    <lineage>
        <taxon>Bacteria</taxon>
        <taxon>Bacillati</taxon>
        <taxon>Bacillota</taxon>
        <taxon>Bacilli</taxon>
        <taxon>Bacillales</taxon>
        <taxon>Bacillaceae</taxon>
        <taxon>Bacillus</taxon>
    </lineage>
</organism>
<accession>P00694</accession>
<gene>
    <name type="primary">xynA</name>
</gene>
<evidence type="ECO:0000255" key="1">
    <source>
        <dbReference type="PROSITE-ProRule" id="PRU01097"/>
    </source>
</evidence>
<evidence type="ECO:0000255" key="2">
    <source>
        <dbReference type="PROSITE-ProRule" id="PRU10062"/>
    </source>
</evidence>
<evidence type="ECO:0000255" key="3">
    <source>
        <dbReference type="PROSITE-ProRule" id="PRU10063"/>
    </source>
</evidence>
<evidence type="ECO:0000269" key="4">
    <source>
    </source>
</evidence>
<evidence type="ECO:0000305" key="5"/>
<proteinExistence type="evidence at protein level"/>
<dbReference type="EC" id="3.2.1.8"/>
<dbReference type="EMBL" id="X00660">
    <property type="protein sequence ID" value="CAA25278.1"/>
    <property type="molecule type" value="Genomic_DNA"/>
</dbReference>
<dbReference type="PIR" id="A00848">
    <property type="entry name" value="WWBSXP"/>
</dbReference>
<dbReference type="SMR" id="P00694"/>
<dbReference type="CAZy" id="GH11">
    <property type="family name" value="Glycoside Hydrolase Family 11"/>
</dbReference>
<dbReference type="UniPathway" id="UPA00114"/>
<dbReference type="GO" id="GO:0031176">
    <property type="term" value="F:endo-1,4-beta-xylanase activity"/>
    <property type="evidence" value="ECO:0007669"/>
    <property type="project" value="UniProtKB-EC"/>
</dbReference>
<dbReference type="GO" id="GO:0045493">
    <property type="term" value="P:xylan catabolic process"/>
    <property type="evidence" value="ECO:0007669"/>
    <property type="project" value="UniProtKB-UniPathway"/>
</dbReference>
<dbReference type="Gene3D" id="2.60.120.180">
    <property type="match status" value="1"/>
</dbReference>
<dbReference type="InterPro" id="IPR013320">
    <property type="entry name" value="ConA-like_dom_sf"/>
</dbReference>
<dbReference type="InterPro" id="IPR013319">
    <property type="entry name" value="GH11/12"/>
</dbReference>
<dbReference type="InterPro" id="IPR018208">
    <property type="entry name" value="GH11_AS_1"/>
</dbReference>
<dbReference type="InterPro" id="IPR033119">
    <property type="entry name" value="GH11_AS_2"/>
</dbReference>
<dbReference type="InterPro" id="IPR033123">
    <property type="entry name" value="GH11_dom"/>
</dbReference>
<dbReference type="InterPro" id="IPR001137">
    <property type="entry name" value="Glyco_hydro_11"/>
</dbReference>
<dbReference type="PANTHER" id="PTHR46828">
    <property type="entry name" value="ENDO-1,4-BETA-XYLANASE A-RELATED"/>
    <property type="match status" value="1"/>
</dbReference>
<dbReference type="PANTHER" id="PTHR46828:SF2">
    <property type="entry name" value="ENDO-1,4-BETA-XYLANASE A-RELATED"/>
    <property type="match status" value="1"/>
</dbReference>
<dbReference type="Pfam" id="PF00457">
    <property type="entry name" value="Glyco_hydro_11"/>
    <property type="match status" value="1"/>
</dbReference>
<dbReference type="PRINTS" id="PR00911">
    <property type="entry name" value="GLHYDRLASE11"/>
</dbReference>
<dbReference type="SUPFAM" id="SSF49899">
    <property type="entry name" value="Concanavalin A-like lectins/glucanases"/>
    <property type="match status" value="1"/>
</dbReference>
<dbReference type="PROSITE" id="PS00776">
    <property type="entry name" value="GH11_1"/>
    <property type="match status" value="1"/>
</dbReference>
<dbReference type="PROSITE" id="PS00777">
    <property type="entry name" value="GH11_2"/>
    <property type="match status" value="1"/>
</dbReference>
<dbReference type="PROSITE" id="PS51761">
    <property type="entry name" value="GH11_3"/>
    <property type="match status" value="1"/>
</dbReference>
<reference key="1">
    <citation type="journal article" date="1984" name="FEBS Lett.">
        <title>The complete nucleotide sequence of the xylanase gene (xynA) of Bacillus pumilus.</title>
        <authorList>
            <person name="Fukusaki E."/>
            <person name="Panbangred W."/>
            <person name="Shinmyo A."/>
            <person name="Okada H."/>
        </authorList>
    </citation>
    <scope>NUCLEOTIDE SEQUENCE [GENOMIC DNA]</scope>
    <source>
        <strain>IPO</strain>
    </source>
</reference>
<reference key="2">
    <citation type="submission" date="1991-02" db="EMBL/GenBank/DDBJ databases">
        <authorList>
            <person name="Urabe I."/>
        </authorList>
    </citation>
    <scope>SEQUENCE REVISION TO 103</scope>
</reference>
<reference key="3">
    <citation type="journal article" date="1992" name="Biochem. J.">
        <title>Site-directed mutagenesis at aspartate and glutamate residues of xylanase from Bacillus pumilus.</title>
        <authorList>
            <person name="Ko E.P."/>
            <person name="Akatsuka H."/>
            <person name="Moriyama H."/>
            <person name="Shinmyo A."/>
            <person name="Hata Y."/>
            <person name="Katsube Y."/>
            <person name="Urabe I."/>
            <person name="Okada H."/>
        </authorList>
    </citation>
    <scope>MUTAGENESIS</scope>
    <scope>ACTIVE SITES</scope>
</reference>
<comment type="catalytic activity">
    <reaction>
        <text>Endohydrolysis of (1-&gt;4)-beta-D-xylosidic linkages in xylans.</text>
        <dbReference type="EC" id="3.2.1.8"/>
    </reaction>
</comment>
<comment type="pathway">
    <text>Glycan degradation; xylan degradation.</text>
</comment>
<comment type="similarity">
    <text evidence="5">Belongs to the glycosyl hydrolase 11 (cellulase G) family.</text>
</comment>